<accession>B6J4A4</accession>
<evidence type="ECO:0000255" key="1">
    <source>
        <dbReference type="HAMAP-Rule" id="MF_00110"/>
    </source>
</evidence>
<sequence>MKTERVNVNVNNQPYPIYIGENLLQDKSLLQRHVKGRQVMIVSNETIAAFYLDPLKAIYQDFQCDTFILPDGEQYKTLEYWERILHKLASCNHHRDTTLIALGGGVVGDITGFAAACYQRGVDFIQVPTTLLAQVDASIGGKTAVNHPVGKNLIGAFHQPKAVIIDLNTLNTLPEREFKAGMAEIVKAALIKDEKFFTDLENKMSDLLQRNFIFLQAVIKRAAEIKRDIVNADEKERSGERALLNLGHTFAHAIERLLGYGQWLHGEAVSAGLVLAAQLSHRKNLLDFESLQRICRLLTQISLPIHFPKSINADELLSAMYMDKKVANERLHLILLEDLGHAVVSDQVDDRELKSFLENG</sequence>
<comment type="function">
    <text evidence="1">Catalyzes the conversion of 3-deoxy-D-arabino-heptulosonate 7-phosphate (DAHP) to dehydroquinate (DHQ).</text>
</comment>
<comment type="catalytic activity">
    <reaction evidence="1">
        <text>7-phospho-2-dehydro-3-deoxy-D-arabino-heptonate = 3-dehydroquinate + phosphate</text>
        <dbReference type="Rhea" id="RHEA:21968"/>
        <dbReference type="ChEBI" id="CHEBI:32364"/>
        <dbReference type="ChEBI" id="CHEBI:43474"/>
        <dbReference type="ChEBI" id="CHEBI:58394"/>
        <dbReference type="EC" id="4.2.3.4"/>
    </reaction>
</comment>
<comment type="cofactor">
    <cofactor evidence="1">
        <name>Co(2+)</name>
        <dbReference type="ChEBI" id="CHEBI:48828"/>
    </cofactor>
    <cofactor evidence="1">
        <name>Zn(2+)</name>
        <dbReference type="ChEBI" id="CHEBI:29105"/>
    </cofactor>
    <text evidence="1">Binds 1 divalent metal cation per subunit. Can use either Co(2+) or Zn(2+).</text>
</comment>
<comment type="cofactor">
    <cofactor evidence="1">
        <name>NAD(+)</name>
        <dbReference type="ChEBI" id="CHEBI:57540"/>
    </cofactor>
</comment>
<comment type="pathway">
    <text evidence="1">Metabolic intermediate biosynthesis; chorismate biosynthesis; chorismate from D-erythrose 4-phosphate and phosphoenolpyruvate: step 2/7.</text>
</comment>
<comment type="subcellular location">
    <subcellularLocation>
        <location evidence="1">Cytoplasm</location>
    </subcellularLocation>
</comment>
<comment type="similarity">
    <text evidence="1">Belongs to the sugar phosphate cyclases superfamily. Dehydroquinate synthase family.</text>
</comment>
<feature type="chain" id="PRO_1000094496" description="3-dehydroquinate synthase">
    <location>
        <begin position="1"/>
        <end position="360"/>
    </location>
</feature>
<feature type="binding site" evidence="1">
    <location>
        <begin position="71"/>
        <end position="76"/>
    </location>
    <ligand>
        <name>NAD(+)</name>
        <dbReference type="ChEBI" id="CHEBI:57540"/>
    </ligand>
</feature>
<feature type="binding site" evidence="1">
    <location>
        <begin position="105"/>
        <end position="109"/>
    </location>
    <ligand>
        <name>NAD(+)</name>
        <dbReference type="ChEBI" id="CHEBI:57540"/>
    </ligand>
</feature>
<feature type="binding site" evidence="1">
    <location>
        <begin position="129"/>
        <end position="130"/>
    </location>
    <ligand>
        <name>NAD(+)</name>
        <dbReference type="ChEBI" id="CHEBI:57540"/>
    </ligand>
</feature>
<feature type="binding site" evidence="1">
    <location>
        <position position="142"/>
    </location>
    <ligand>
        <name>NAD(+)</name>
        <dbReference type="ChEBI" id="CHEBI:57540"/>
    </ligand>
</feature>
<feature type="binding site" evidence="1">
    <location>
        <position position="151"/>
    </location>
    <ligand>
        <name>NAD(+)</name>
        <dbReference type="ChEBI" id="CHEBI:57540"/>
    </ligand>
</feature>
<feature type="binding site" evidence="1">
    <location>
        <begin position="169"/>
        <end position="172"/>
    </location>
    <ligand>
        <name>NAD(+)</name>
        <dbReference type="ChEBI" id="CHEBI:57540"/>
    </ligand>
</feature>
<feature type="binding site" evidence="1">
    <location>
        <position position="184"/>
    </location>
    <ligand>
        <name>Zn(2+)</name>
        <dbReference type="ChEBI" id="CHEBI:29105"/>
    </ligand>
</feature>
<feature type="binding site" evidence="1">
    <location>
        <position position="248"/>
    </location>
    <ligand>
        <name>Zn(2+)</name>
        <dbReference type="ChEBI" id="CHEBI:29105"/>
    </ligand>
</feature>
<feature type="binding site" evidence="1">
    <location>
        <position position="265"/>
    </location>
    <ligand>
        <name>Zn(2+)</name>
        <dbReference type="ChEBI" id="CHEBI:29105"/>
    </ligand>
</feature>
<gene>
    <name evidence="1" type="primary">aroB</name>
    <name type="ordered locus">CbuK_0192</name>
</gene>
<name>AROB_COXB1</name>
<organism>
    <name type="scientific">Coxiella burnetii (strain CbuK_Q154)</name>
    <name type="common">Coxiella burnetii (strain Q154)</name>
    <dbReference type="NCBI Taxonomy" id="434924"/>
    <lineage>
        <taxon>Bacteria</taxon>
        <taxon>Pseudomonadati</taxon>
        <taxon>Pseudomonadota</taxon>
        <taxon>Gammaproteobacteria</taxon>
        <taxon>Legionellales</taxon>
        <taxon>Coxiellaceae</taxon>
        <taxon>Coxiella</taxon>
    </lineage>
</organism>
<dbReference type="EC" id="4.2.3.4" evidence="1"/>
<dbReference type="EMBL" id="CP001020">
    <property type="protein sequence ID" value="ACJ19508.1"/>
    <property type="molecule type" value="Genomic_DNA"/>
</dbReference>
<dbReference type="RefSeq" id="WP_005770315.1">
    <property type="nucleotide sequence ID" value="NC_011528.1"/>
</dbReference>
<dbReference type="SMR" id="B6J4A4"/>
<dbReference type="KEGG" id="cbc:CbuK_0192"/>
<dbReference type="HOGENOM" id="CLU_001201_0_2_6"/>
<dbReference type="UniPathway" id="UPA00053">
    <property type="reaction ID" value="UER00085"/>
</dbReference>
<dbReference type="GO" id="GO:0005737">
    <property type="term" value="C:cytoplasm"/>
    <property type="evidence" value="ECO:0007669"/>
    <property type="project" value="UniProtKB-SubCell"/>
</dbReference>
<dbReference type="GO" id="GO:0003856">
    <property type="term" value="F:3-dehydroquinate synthase activity"/>
    <property type="evidence" value="ECO:0007669"/>
    <property type="project" value="UniProtKB-UniRule"/>
</dbReference>
<dbReference type="GO" id="GO:0046872">
    <property type="term" value="F:metal ion binding"/>
    <property type="evidence" value="ECO:0007669"/>
    <property type="project" value="UniProtKB-KW"/>
</dbReference>
<dbReference type="GO" id="GO:0000166">
    <property type="term" value="F:nucleotide binding"/>
    <property type="evidence" value="ECO:0007669"/>
    <property type="project" value="UniProtKB-KW"/>
</dbReference>
<dbReference type="GO" id="GO:0008652">
    <property type="term" value="P:amino acid biosynthetic process"/>
    <property type="evidence" value="ECO:0007669"/>
    <property type="project" value="UniProtKB-KW"/>
</dbReference>
<dbReference type="GO" id="GO:0009073">
    <property type="term" value="P:aromatic amino acid family biosynthetic process"/>
    <property type="evidence" value="ECO:0007669"/>
    <property type="project" value="UniProtKB-KW"/>
</dbReference>
<dbReference type="GO" id="GO:0009423">
    <property type="term" value="P:chorismate biosynthetic process"/>
    <property type="evidence" value="ECO:0007669"/>
    <property type="project" value="UniProtKB-UniRule"/>
</dbReference>
<dbReference type="CDD" id="cd08195">
    <property type="entry name" value="DHQS"/>
    <property type="match status" value="1"/>
</dbReference>
<dbReference type="FunFam" id="3.40.50.1970:FF:000035">
    <property type="entry name" value="3-dehydroquinate synthase"/>
    <property type="match status" value="1"/>
</dbReference>
<dbReference type="Gene3D" id="3.40.50.1970">
    <property type="match status" value="1"/>
</dbReference>
<dbReference type="Gene3D" id="1.20.1090.10">
    <property type="entry name" value="Dehydroquinate synthase-like - alpha domain"/>
    <property type="match status" value="1"/>
</dbReference>
<dbReference type="HAMAP" id="MF_00110">
    <property type="entry name" value="DHQ_synthase"/>
    <property type="match status" value="1"/>
</dbReference>
<dbReference type="InterPro" id="IPR050071">
    <property type="entry name" value="Dehydroquinate_synthase"/>
</dbReference>
<dbReference type="InterPro" id="IPR016037">
    <property type="entry name" value="DHQ_synth_AroB"/>
</dbReference>
<dbReference type="InterPro" id="IPR030963">
    <property type="entry name" value="DHQ_synth_fam"/>
</dbReference>
<dbReference type="InterPro" id="IPR030960">
    <property type="entry name" value="DHQS/DOIS_N"/>
</dbReference>
<dbReference type="InterPro" id="IPR056179">
    <property type="entry name" value="DHQS_C"/>
</dbReference>
<dbReference type="NCBIfam" id="TIGR01357">
    <property type="entry name" value="aroB"/>
    <property type="match status" value="1"/>
</dbReference>
<dbReference type="PANTHER" id="PTHR43622">
    <property type="entry name" value="3-DEHYDROQUINATE SYNTHASE"/>
    <property type="match status" value="1"/>
</dbReference>
<dbReference type="PANTHER" id="PTHR43622:SF7">
    <property type="entry name" value="3-DEHYDROQUINATE SYNTHASE, CHLOROPLASTIC"/>
    <property type="match status" value="1"/>
</dbReference>
<dbReference type="Pfam" id="PF01761">
    <property type="entry name" value="DHQ_synthase"/>
    <property type="match status" value="1"/>
</dbReference>
<dbReference type="Pfam" id="PF24621">
    <property type="entry name" value="DHQS_C"/>
    <property type="match status" value="1"/>
</dbReference>
<dbReference type="PIRSF" id="PIRSF001455">
    <property type="entry name" value="DHQ_synth"/>
    <property type="match status" value="1"/>
</dbReference>
<dbReference type="SUPFAM" id="SSF56796">
    <property type="entry name" value="Dehydroquinate synthase-like"/>
    <property type="match status" value="1"/>
</dbReference>
<keyword id="KW-0028">Amino-acid biosynthesis</keyword>
<keyword id="KW-0057">Aromatic amino acid biosynthesis</keyword>
<keyword id="KW-0170">Cobalt</keyword>
<keyword id="KW-0963">Cytoplasm</keyword>
<keyword id="KW-0456">Lyase</keyword>
<keyword id="KW-0479">Metal-binding</keyword>
<keyword id="KW-0520">NAD</keyword>
<keyword id="KW-0547">Nucleotide-binding</keyword>
<keyword id="KW-0862">Zinc</keyword>
<proteinExistence type="inferred from homology"/>
<reference key="1">
    <citation type="journal article" date="2009" name="Infect. Immun.">
        <title>Comparative genomics reveal extensive transposon-mediated genomic plasticity and diversity among potential effector proteins within the genus Coxiella.</title>
        <authorList>
            <person name="Beare P.A."/>
            <person name="Unsworth N."/>
            <person name="Andoh M."/>
            <person name="Voth D.E."/>
            <person name="Omsland A."/>
            <person name="Gilk S.D."/>
            <person name="Williams K.P."/>
            <person name="Sobral B.W."/>
            <person name="Kupko J.J. III"/>
            <person name="Porcella S.F."/>
            <person name="Samuel J.E."/>
            <person name="Heinzen R.A."/>
        </authorList>
    </citation>
    <scope>NUCLEOTIDE SEQUENCE [LARGE SCALE GENOMIC DNA]</scope>
    <source>
        <strain>CbuK_Q154</strain>
    </source>
</reference>
<protein>
    <recommendedName>
        <fullName evidence="1">3-dehydroquinate synthase</fullName>
        <shortName evidence="1">DHQS</shortName>
        <ecNumber evidence="1">4.2.3.4</ecNumber>
    </recommendedName>
</protein>